<accession>A6H4Q4</accession>
<comment type="function">
    <text evidence="3">Component of the ubiquinol-cytochrome c reductase complex (complex III or cytochrome b-c1 complex) that is part of the mitochondrial respiratory chain. The b-c1 complex mediates electron transfer from ubiquinol to cytochrome c. Contributes to the generation of a proton gradient across the mitochondrial membrane that is then used for ATP synthesis.</text>
</comment>
<comment type="cofactor">
    <cofactor evidence="3">
        <name>heme b</name>
        <dbReference type="ChEBI" id="CHEBI:60344"/>
    </cofactor>
    <text evidence="3">Binds 2 heme b groups non-covalently.</text>
</comment>
<comment type="subunit">
    <text evidence="3">Fungal cytochrome b-c1 complex contains 10 subunits; 3 respiratory subunits, 2 core proteins and 5 low-molecular weight proteins. Cytochrome b-c1 complex is a homodimer.</text>
</comment>
<comment type="subcellular location">
    <subcellularLocation>
        <location evidence="3">Mitochondrion inner membrane</location>
        <topology evidence="3">Multi-pass membrane protein</topology>
    </subcellularLocation>
</comment>
<comment type="miscellaneous">
    <text evidence="1">Heme 1 (or BL or b562) is low-potential and absorbs at about 562 nm, and heme 2 (or BH or b566) is high-potential and absorbs at about 566 nm.</text>
</comment>
<comment type="similarity">
    <text evidence="4 5">Belongs to the cytochrome b family.</text>
</comment>
<comment type="caution">
    <text evidence="3">The protein contains only eight transmembrane helices, not nine as predicted by bioinformatics tools.</text>
</comment>
<feature type="chain" id="PRO_0000356873" description="Cytochrome b">
    <location>
        <begin position="1"/>
        <end position="389"/>
    </location>
</feature>
<feature type="transmembrane region" description="Helical" evidence="3">
    <location>
        <begin position="36"/>
        <end position="56"/>
    </location>
</feature>
<feature type="transmembrane region" description="Helical" evidence="3">
    <location>
        <begin position="80"/>
        <end position="102"/>
    </location>
</feature>
<feature type="transmembrane region" description="Helical" evidence="3">
    <location>
        <begin position="117"/>
        <end position="137"/>
    </location>
</feature>
<feature type="transmembrane region" description="Helical" evidence="3">
    <location>
        <begin position="183"/>
        <end position="203"/>
    </location>
</feature>
<feature type="transmembrane region" description="Helical" evidence="3">
    <location>
        <begin position="229"/>
        <end position="249"/>
    </location>
</feature>
<feature type="transmembrane region" description="Helical" evidence="3">
    <location>
        <begin position="293"/>
        <end position="313"/>
    </location>
</feature>
<feature type="transmembrane region" description="Helical" evidence="3">
    <location>
        <begin position="325"/>
        <end position="345"/>
    </location>
</feature>
<feature type="transmembrane region" description="Helical" evidence="3">
    <location>
        <begin position="352"/>
        <end position="372"/>
    </location>
</feature>
<feature type="binding site" description="axial binding residue" evidence="5">
    <location>
        <position position="86"/>
    </location>
    <ligand>
        <name>heme b</name>
        <dbReference type="ChEBI" id="CHEBI:60344"/>
        <label>b562</label>
    </ligand>
    <ligandPart>
        <name>Fe</name>
        <dbReference type="ChEBI" id="CHEBI:18248"/>
    </ligandPart>
</feature>
<feature type="binding site" description="axial binding residue" evidence="5">
    <location>
        <position position="100"/>
    </location>
    <ligand>
        <name>heme b</name>
        <dbReference type="ChEBI" id="CHEBI:60344"/>
        <label>b566</label>
    </ligand>
    <ligandPart>
        <name>Fe</name>
        <dbReference type="ChEBI" id="CHEBI:18248"/>
    </ligandPart>
</feature>
<feature type="binding site" description="axial binding residue" evidence="5">
    <location>
        <position position="187"/>
    </location>
    <ligand>
        <name>heme b</name>
        <dbReference type="ChEBI" id="CHEBI:60344"/>
        <label>b562</label>
    </ligand>
    <ligandPart>
        <name>Fe</name>
        <dbReference type="ChEBI" id="CHEBI:18248"/>
    </ligandPart>
</feature>
<feature type="binding site" description="axial binding residue" evidence="5">
    <location>
        <position position="201"/>
    </location>
    <ligand>
        <name>heme b</name>
        <dbReference type="ChEBI" id="CHEBI:60344"/>
        <label>b566</label>
    </ligand>
    <ligandPart>
        <name>Fe</name>
        <dbReference type="ChEBI" id="CHEBI:18248"/>
    </ligandPart>
</feature>
<feature type="binding site" evidence="2">
    <location>
        <position position="206"/>
    </location>
    <ligand>
        <name>a ubiquinone</name>
        <dbReference type="ChEBI" id="CHEBI:16389"/>
    </ligand>
</feature>
<protein>
    <recommendedName>
        <fullName>Cytochrome b</fullName>
    </recommendedName>
</protein>
<evidence type="ECO:0000250" key="1"/>
<evidence type="ECO:0000250" key="2">
    <source>
        <dbReference type="UniProtKB" id="P00157"/>
    </source>
</evidence>
<evidence type="ECO:0000250" key="3">
    <source>
        <dbReference type="UniProtKB" id="P00163"/>
    </source>
</evidence>
<evidence type="ECO:0000255" key="4">
    <source>
        <dbReference type="PROSITE-ProRule" id="PRU00967"/>
    </source>
</evidence>
<evidence type="ECO:0000255" key="5">
    <source>
        <dbReference type="PROSITE-ProRule" id="PRU00968"/>
    </source>
</evidence>
<geneLocation type="mitochondrion"/>
<dbReference type="EMBL" id="AM698041">
    <property type="protein sequence ID" value="CAN85577.1"/>
    <property type="molecule type" value="Genomic_DNA"/>
</dbReference>
<dbReference type="RefSeq" id="YP_001331016.2">
    <property type="nucleotide sequence ID" value="NC_009638.1"/>
</dbReference>
<dbReference type="SMR" id="A6H4Q4"/>
<dbReference type="FunCoup" id="A6H4Q4">
    <property type="interactions" value="666"/>
</dbReference>
<dbReference type="STRING" id="436907.A6H4Q4"/>
<dbReference type="KEGG" id="vpo:VapofMp04"/>
<dbReference type="InParanoid" id="A6H4Q4"/>
<dbReference type="Proteomes" id="UP000000267">
    <property type="component" value="Mitochondrion"/>
</dbReference>
<dbReference type="GO" id="GO:0005743">
    <property type="term" value="C:mitochondrial inner membrane"/>
    <property type="evidence" value="ECO:0007669"/>
    <property type="project" value="UniProtKB-SubCell"/>
</dbReference>
<dbReference type="GO" id="GO:0045275">
    <property type="term" value="C:respiratory chain complex III"/>
    <property type="evidence" value="ECO:0007669"/>
    <property type="project" value="InterPro"/>
</dbReference>
<dbReference type="GO" id="GO:0046872">
    <property type="term" value="F:metal ion binding"/>
    <property type="evidence" value="ECO:0007669"/>
    <property type="project" value="UniProtKB-KW"/>
</dbReference>
<dbReference type="GO" id="GO:0008121">
    <property type="term" value="F:ubiquinol-cytochrome-c reductase activity"/>
    <property type="evidence" value="ECO:0007669"/>
    <property type="project" value="InterPro"/>
</dbReference>
<dbReference type="GO" id="GO:0006122">
    <property type="term" value="P:mitochondrial electron transport, ubiquinol to cytochrome c"/>
    <property type="evidence" value="ECO:0007669"/>
    <property type="project" value="TreeGrafter"/>
</dbReference>
<dbReference type="CDD" id="cd00290">
    <property type="entry name" value="cytochrome_b_C"/>
    <property type="match status" value="1"/>
</dbReference>
<dbReference type="CDD" id="cd00284">
    <property type="entry name" value="Cytochrome_b_N"/>
    <property type="match status" value="1"/>
</dbReference>
<dbReference type="FunFam" id="1.20.810.10:FF:000002">
    <property type="entry name" value="Cytochrome b"/>
    <property type="match status" value="1"/>
</dbReference>
<dbReference type="Gene3D" id="1.20.810.10">
    <property type="entry name" value="Cytochrome Bc1 Complex, Chain C"/>
    <property type="match status" value="1"/>
</dbReference>
<dbReference type="InterPro" id="IPR005798">
    <property type="entry name" value="Cyt_b/b6_C"/>
</dbReference>
<dbReference type="InterPro" id="IPR036150">
    <property type="entry name" value="Cyt_b/b6_C_sf"/>
</dbReference>
<dbReference type="InterPro" id="IPR005797">
    <property type="entry name" value="Cyt_b/b6_N"/>
</dbReference>
<dbReference type="InterPro" id="IPR027387">
    <property type="entry name" value="Cytb/b6-like_sf"/>
</dbReference>
<dbReference type="InterPro" id="IPR030689">
    <property type="entry name" value="Cytochrome_b"/>
</dbReference>
<dbReference type="InterPro" id="IPR048260">
    <property type="entry name" value="Cytochrome_b_C_euk/bac"/>
</dbReference>
<dbReference type="InterPro" id="IPR048259">
    <property type="entry name" value="Cytochrome_b_N_euk/bac"/>
</dbReference>
<dbReference type="InterPro" id="IPR016174">
    <property type="entry name" value="Di-haem_cyt_TM"/>
</dbReference>
<dbReference type="PANTHER" id="PTHR19271">
    <property type="entry name" value="CYTOCHROME B"/>
    <property type="match status" value="1"/>
</dbReference>
<dbReference type="PANTHER" id="PTHR19271:SF16">
    <property type="entry name" value="CYTOCHROME B"/>
    <property type="match status" value="1"/>
</dbReference>
<dbReference type="Pfam" id="PF00032">
    <property type="entry name" value="Cytochrom_B_C"/>
    <property type="match status" value="1"/>
</dbReference>
<dbReference type="Pfam" id="PF00033">
    <property type="entry name" value="Cytochrome_B"/>
    <property type="match status" value="1"/>
</dbReference>
<dbReference type="PIRSF" id="PIRSF038885">
    <property type="entry name" value="COB"/>
    <property type="match status" value="1"/>
</dbReference>
<dbReference type="SUPFAM" id="SSF81648">
    <property type="entry name" value="a domain/subunit of cytochrome bc1 complex (Ubiquinol-cytochrome c reductase)"/>
    <property type="match status" value="1"/>
</dbReference>
<dbReference type="SUPFAM" id="SSF81342">
    <property type="entry name" value="Transmembrane di-heme cytochromes"/>
    <property type="match status" value="1"/>
</dbReference>
<dbReference type="PROSITE" id="PS51003">
    <property type="entry name" value="CYTB_CTER"/>
    <property type="match status" value="1"/>
</dbReference>
<dbReference type="PROSITE" id="PS51002">
    <property type="entry name" value="CYTB_NTER"/>
    <property type="match status" value="1"/>
</dbReference>
<keyword id="KW-0249">Electron transport</keyword>
<keyword id="KW-0349">Heme</keyword>
<keyword id="KW-0408">Iron</keyword>
<keyword id="KW-0472">Membrane</keyword>
<keyword id="KW-0479">Metal-binding</keyword>
<keyword id="KW-0496">Mitochondrion</keyword>
<keyword id="KW-0999">Mitochondrion inner membrane</keyword>
<keyword id="KW-1185">Reference proteome</keyword>
<keyword id="KW-0679">Respiratory chain</keyword>
<keyword id="KW-0812">Transmembrane</keyword>
<keyword id="KW-1133">Transmembrane helix</keyword>
<keyword id="KW-0813">Transport</keyword>
<keyword id="KW-0830">Ubiquinone</keyword>
<name>CYB_VANPO</name>
<sequence>MTMKMSYRKSNIYLSLVNSYMIDSPQPSSINYWWNMGSLLGLCLVIQICTGIFLAMHYSSNIELAFSSVEHIMRDVQYGWLIRYMHANGASFFFMCMYTHIAKGLYYGSYKSPRVTVWTVGVIIFVLTMAAAFLGYCCVYGQMSHWGATVITNLFSAIPFIGKDIVLWLWGGFSVSNPTIQRFFAFHYLVPFIIAAVVIMHMMALHTHGSSNPLGITGNLDRIPMHGYFVFKDLITVFVFMILFSLFVFYSPNTLGHPDNYIPGNPLVTPASIVPEWYLLPFYAILRSIPDKLLGVITMFAAILVLLVLPITDRSVVRGNSFKVLSKFFFFIFVFNFVLLGIIGMQHVEVPFVLIGQISTGIYFAYFIIIVPVISMIENVLFYIGRVSK</sequence>
<gene>
    <name type="primary">COB</name>
    <name type="ORF">VapofMp04</name>
</gene>
<organism>
    <name type="scientific">Vanderwaltozyma polyspora (strain ATCC 22028 / DSM 70294 / BCRC 21397 / CBS 2163 / NBRC 10782 / NRRL Y-8283 / UCD 57-17)</name>
    <name type="common">Kluyveromyces polysporus</name>
    <dbReference type="NCBI Taxonomy" id="436907"/>
    <lineage>
        <taxon>Eukaryota</taxon>
        <taxon>Fungi</taxon>
        <taxon>Dikarya</taxon>
        <taxon>Ascomycota</taxon>
        <taxon>Saccharomycotina</taxon>
        <taxon>Saccharomycetes</taxon>
        <taxon>Saccharomycetales</taxon>
        <taxon>Saccharomycetaceae</taxon>
        <taxon>Vanderwaltozyma</taxon>
    </lineage>
</organism>
<reference key="1">
    <citation type="journal article" date="2007" name="Proc. Natl. Acad. Sci. U.S.A.">
        <title>Independent sorting-out of thousands of duplicated gene pairs in two yeast species descended from a whole-genome duplication.</title>
        <authorList>
            <person name="Scannell D.R."/>
            <person name="Frank A.C."/>
            <person name="Conant G.C."/>
            <person name="Byrne K.P."/>
            <person name="Woolfit M."/>
            <person name="Wolfe K.H."/>
        </authorList>
    </citation>
    <scope>NUCLEOTIDE SEQUENCE [LARGE SCALE GENOMIC DNA]</scope>
    <source>
        <strain>ATCC 22028 / DSM 70294 / BCRC 21397 / CBS 2163 / NBRC 10782 / NRRL Y-8283 / UCD 57-17</strain>
    </source>
</reference>
<proteinExistence type="inferred from homology"/>